<comment type="similarity">
    <text evidence="1">Belongs to the CinA family.</text>
</comment>
<comment type="sequence caution" evidence="2">
    <conflict type="erroneous initiation">
        <sequence resource="EMBL-CDS" id="ABP89034"/>
    </conflict>
</comment>
<accession>A4VSE5</accession>
<sequence length="393" mass="42962">MKAELIAVGTEILTGQIINTNAQFLSEKCAELGIDVYFHTAVGDNEGRLLSTLEVASKRSNMVVLCGGLGPTEDDLTKQTLATFLGRNLVFDELAMAKLDRFFASRPGRVRTPNNERQAQIVEGSQALQNPAGLAVGGMIEQDGVTYIVLPGPPSELKAMFSESLLPLLSQSQQQLYSRVLRFFGIGESQLVTVLADVIDKQTDPTLAPYAKVGEVTLRLSTKATSQEEANLRLNQLEEDILQHDKLADYFYAYGEDNSLVKTVATRLAEKRQTIAIVEQGTGGLLQAELSLALADQPYFSGGKVVGQLGIESGWLSEEADCIRQELQADLGLAVSVLIKPESTEDNVLAKVYLTLATPSGISQKEIDLRGYSWQYLRQLACLQAWDFVRNTL</sequence>
<feature type="chain" id="PRO_0000336529" description="Putative competence-damage inducible protein">
    <location>
        <begin position="1"/>
        <end position="393"/>
    </location>
</feature>
<evidence type="ECO:0000255" key="1">
    <source>
        <dbReference type="HAMAP-Rule" id="MF_00226"/>
    </source>
</evidence>
<evidence type="ECO:0000305" key="2"/>
<proteinExistence type="inferred from homology"/>
<name>CINA_STRSY</name>
<gene>
    <name evidence="1" type="primary">cinA</name>
    <name type="ordered locus">SSU05_0062</name>
</gene>
<reference key="1">
    <citation type="journal article" date="2007" name="PLoS ONE">
        <title>A glimpse of streptococcal toxic shock syndrome from comparative genomics of S. suis 2 Chinese isolates.</title>
        <authorList>
            <person name="Chen C."/>
            <person name="Tang J."/>
            <person name="Dong W."/>
            <person name="Wang C."/>
            <person name="Feng Y."/>
            <person name="Wang J."/>
            <person name="Zheng F."/>
            <person name="Pan X."/>
            <person name="Liu D."/>
            <person name="Li M."/>
            <person name="Song Y."/>
            <person name="Zhu X."/>
            <person name="Sun H."/>
            <person name="Feng T."/>
            <person name="Guo Z."/>
            <person name="Ju A."/>
            <person name="Ge J."/>
            <person name="Dong Y."/>
            <person name="Sun W."/>
            <person name="Jiang Y."/>
            <person name="Wang J."/>
            <person name="Yan J."/>
            <person name="Yang H."/>
            <person name="Wang X."/>
            <person name="Gao G.F."/>
            <person name="Yang R."/>
            <person name="Wang J."/>
            <person name="Yu J."/>
        </authorList>
    </citation>
    <scope>NUCLEOTIDE SEQUENCE [LARGE SCALE GENOMIC DNA]</scope>
    <source>
        <strain>05ZYH33</strain>
    </source>
</reference>
<protein>
    <recommendedName>
        <fullName evidence="1">Putative competence-damage inducible protein</fullName>
    </recommendedName>
</protein>
<dbReference type="EMBL" id="CP000407">
    <property type="protein sequence ID" value="ABP89034.1"/>
    <property type="status" value="ALT_INIT"/>
    <property type="molecule type" value="Genomic_DNA"/>
</dbReference>
<dbReference type="SMR" id="A4VSE5"/>
<dbReference type="STRING" id="391295.SSU05_0062"/>
<dbReference type="KEGG" id="ssu:SSU05_0062"/>
<dbReference type="eggNOG" id="COG1058">
    <property type="taxonomic scope" value="Bacteria"/>
</dbReference>
<dbReference type="eggNOG" id="COG1546">
    <property type="taxonomic scope" value="Bacteria"/>
</dbReference>
<dbReference type="HOGENOM" id="CLU_030805_9_3_9"/>
<dbReference type="CDD" id="cd00885">
    <property type="entry name" value="cinA"/>
    <property type="match status" value="1"/>
</dbReference>
<dbReference type="Gene3D" id="3.30.70.2860">
    <property type="match status" value="1"/>
</dbReference>
<dbReference type="Gene3D" id="3.90.950.20">
    <property type="entry name" value="CinA-like"/>
    <property type="match status" value="1"/>
</dbReference>
<dbReference type="Gene3D" id="3.40.980.10">
    <property type="entry name" value="MoaB/Mog-like domain"/>
    <property type="match status" value="1"/>
</dbReference>
<dbReference type="HAMAP" id="MF_00226_B">
    <property type="entry name" value="CinA_B"/>
    <property type="match status" value="1"/>
</dbReference>
<dbReference type="InterPro" id="IPR050101">
    <property type="entry name" value="CinA"/>
</dbReference>
<dbReference type="InterPro" id="IPR036653">
    <property type="entry name" value="CinA-like_C"/>
</dbReference>
<dbReference type="InterPro" id="IPR008136">
    <property type="entry name" value="CinA_C"/>
</dbReference>
<dbReference type="InterPro" id="IPR041424">
    <property type="entry name" value="CinA_KH"/>
</dbReference>
<dbReference type="InterPro" id="IPR008135">
    <property type="entry name" value="Competence-induced_CinA"/>
</dbReference>
<dbReference type="InterPro" id="IPR036425">
    <property type="entry name" value="MoaB/Mog-like_dom_sf"/>
</dbReference>
<dbReference type="InterPro" id="IPR001453">
    <property type="entry name" value="MoaB/Mog_dom"/>
</dbReference>
<dbReference type="NCBIfam" id="TIGR00200">
    <property type="entry name" value="cinA_nterm"/>
    <property type="match status" value="1"/>
</dbReference>
<dbReference type="NCBIfam" id="NF001813">
    <property type="entry name" value="PRK00549.1"/>
    <property type="match status" value="1"/>
</dbReference>
<dbReference type="PANTHER" id="PTHR13939">
    <property type="entry name" value="NICOTINAMIDE-NUCLEOTIDE AMIDOHYDROLASE PNCC"/>
    <property type="match status" value="1"/>
</dbReference>
<dbReference type="PANTHER" id="PTHR13939:SF0">
    <property type="entry name" value="NMN AMIDOHYDROLASE-LIKE PROTEIN YFAY"/>
    <property type="match status" value="1"/>
</dbReference>
<dbReference type="Pfam" id="PF02464">
    <property type="entry name" value="CinA"/>
    <property type="match status" value="1"/>
</dbReference>
<dbReference type="Pfam" id="PF18146">
    <property type="entry name" value="CinA_KH"/>
    <property type="match status" value="1"/>
</dbReference>
<dbReference type="Pfam" id="PF00994">
    <property type="entry name" value="MoCF_biosynth"/>
    <property type="match status" value="1"/>
</dbReference>
<dbReference type="PIRSF" id="PIRSF006728">
    <property type="entry name" value="CinA"/>
    <property type="match status" value="1"/>
</dbReference>
<dbReference type="SMART" id="SM00852">
    <property type="entry name" value="MoCF_biosynth"/>
    <property type="match status" value="1"/>
</dbReference>
<dbReference type="SUPFAM" id="SSF142433">
    <property type="entry name" value="CinA-like"/>
    <property type="match status" value="1"/>
</dbReference>
<dbReference type="SUPFAM" id="SSF53218">
    <property type="entry name" value="Molybdenum cofactor biosynthesis proteins"/>
    <property type="match status" value="1"/>
</dbReference>
<organism>
    <name type="scientific">Streptococcus suis (strain 05ZYH33)</name>
    <dbReference type="NCBI Taxonomy" id="391295"/>
    <lineage>
        <taxon>Bacteria</taxon>
        <taxon>Bacillati</taxon>
        <taxon>Bacillota</taxon>
        <taxon>Bacilli</taxon>
        <taxon>Lactobacillales</taxon>
        <taxon>Streptococcaceae</taxon>
        <taxon>Streptococcus</taxon>
    </lineage>
</organism>